<gene>
    <name evidence="1" type="primary">queC</name>
    <name type="ordered locus">Plut_0543</name>
</gene>
<dbReference type="EC" id="6.3.4.20" evidence="1"/>
<dbReference type="EMBL" id="CP000096">
    <property type="protein sequence ID" value="ABB23427.1"/>
    <property type="molecule type" value="Genomic_DNA"/>
</dbReference>
<dbReference type="RefSeq" id="WP_011357302.1">
    <property type="nucleotide sequence ID" value="NC_007512.1"/>
</dbReference>
<dbReference type="SMR" id="Q3B5F4"/>
<dbReference type="STRING" id="319225.Plut_0543"/>
<dbReference type="KEGG" id="plt:Plut_0543"/>
<dbReference type="eggNOG" id="COG0603">
    <property type="taxonomic scope" value="Bacteria"/>
</dbReference>
<dbReference type="HOGENOM" id="CLU_081854_1_0_10"/>
<dbReference type="OrthoDB" id="9789567at2"/>
<dbReference type="UniPathway" id="UPA00391"/>
<dbReference type="Proteomes" id="UP000002709">
    <property type="component" value="Chromosome"/>
</dbReference>
<dbReference type="GO" id="GO:0005524">
    <property type="term" value="F:ATP binding"/>
    <property type="evidence" value="ECO:0007669"/>
    <property type="project" value="UniProtKB-UniRule"/>
</dbReference>
<dbReference type="GO" id="GO:0016879">
    <property type="term" value="F:ligase activity, forming carbon-nitrogen bonds"/>
    <property type="evidence" value="ECO:0007669"/>
    <property type="project" value="UniProtKB-UniRule"/>
</dbReference>
<dbReference type="GO" id="GO:0008270">
    <property type="term" value="F:zinc ion binding"/>
    <property type="evidence" value="ECO:0007669"/>
    <property type="project" value="UniProtKB-UniRule"/>
</dbReference>
<dbReference type="GO" id="GO:0008616">
    <property type="term" value="P:queuosine biosynthetic process"/>
    <property type="evidence" value="ECO:0007669"/>
    <property type="project" value="UniProtKB-UniRule"/>
</dbReference>
<dbReference type="CDD" id="cd01995">
    <property type="entry name" value="QueC-like"/>
    <property type="match status" value="1"/>
</dbReference>
<dbReference type="Gene3D" id="3.40.50.620">
    <property type="entry name" value="HUPs"/>
    <property type="match status" value="1"/>
</dbReference>
<dbReference type="HAMAP" id="MF_01633">
    <property type="entry name" value="QueC"/>
    <property type="match status" value="1"/>
</dbReference>
<dbReference type="InterPro" id="IPR018317">
    <property type="entry name" value="QueC"/>
</dbReference>
<dbReference type="InterPro" id="IPR014729">
    <property type="entry name" value="Rossmann-like_a/b/a_fold"/>
</dbReference>
<dbReference type="NCBIfam" id="TIGR00364">
    <property type="entry name" value="7-cyano-7-deazaguanine synthase QueC"/>
    <property type="match status" value="1"/>
</dbReference>
<dbReference type="PANTHER" id="PTHR42914">
    <property type="entry name" value="7-CYANO-7-DEAZAGUANINE SYNTHASE"/>
    <property type="match status" value="1"/>
</dbReference>
<dbReference type="PANTHER" id="PTHR42914:SF1">
    <property type="entry name" value="7-CYANO-7-DEAZAGUANINE SYNTHASE"/>
    <property type="match status" value="1"/>
</dbReference>
<dbReference type="Pfam" id="PF06508">
    <property type="entry name" value="QueC"/>
    <property type="match status" value="1"/>
</dbReference>
<dbReference type="PIRSF" id="PIRSF006293">
    <property type="entry name" value="ExsB"/>
    <property type="match status" value="1"/>
</dbReference>
<dbReference type="SUPFAM" id="SSF52402">
    <property type="entry name" value="Adenine nucleotide alpha hydrolases-like"/>
    <property type="match status" value="1"/>
</dbReference>
<organism>
    <name type="scientific">Chlorobium luteolum (strain DSM 273 / BCRC 81028 / 2530)</name>
    <name type="common">Pelodictyon luteolum</name>
    <dbReference type="NCBI Taxonomy" id="319225"/>
    <lineage>
        <taxon>Bacteria</taxon>
        <taxon>Pseudomonadati</taxon>
        <taxon>Chlorobiota</taxon>
        <taxon>Chlorobiia</taxon>
        <taxon>Chlorobiales</taxon>
        <taxon>Chlorobiaceae</taxon>
        <taxon>Chlorobium/Pelodictyon group</taxon>
        <taxon>Pelodictyon</taxon>
    </lineage>
</organism>
<feature type="chain" id="PRO_0000246874" description="7-cyano-7-deazaguanine synthase">
    <location>
        <begin position="1"/>
        <end position="227"/>
    </location>
</feature>
<feature type="binding site" evidence="1">
    <location>
        <begin position="7"/>
        <end position="17"/>
    </location>
    <ligand>
        <name>ATP</name>
        <dbReference type="ChEBI" id="CHEBI:30616"/>
    </ligand>
</feature>
<feature type="binding site" evidence="1">
    <location>
        <position position="187"/>
    </location>
    <ligand>
        <name>Zn(2+)</name>
        <dbReference type="ChEBI" id="CHEBI:29105"/>
    </ligand>
</feature>
<feature type="binding site" evidence="1">
    <location>
        <position position="195"/>
    </location>
    <ligand>
        <name>Zn(2+)</name>
        <dbReference type="ChEBI" id="CHEBI:29105"/>
    </ligand>
</feature>
<feature type="binding site" evidence="1">
    <location>
        <position position="198"/>
    </location>
    <ligand>
        <name>Zn(2+)</name>
        <dbReference type="ChEBI" id="CHEBI:29105"/>
    </ligand>
</feature>
<feature type="binding site" evidence="1">
    <location>
        <position position="201"/>
    </location>
    <ligand>
        <name>Zn(2+)</name>
        <dbReference type="ChEBI" id="CHEBI:29105"/>
    </ligand>
</feature>
<protein>
    <recommendedName>
        <fullName evidence="1">7-cyano-7-deazaguanine synthase</fullName>
        <ecNumber evidence="1">6.3.4.20</ecNumber>
    </recommendedName>
    <alternativeName>
        <fullName evidence="1">7-cyano-7-carbaguanine synthase</fullName>
    </alternativeName>
    <alternativeName>
        <fullName evidence="1">PreQ(0) synthase</fullName>
    </alternativeName>
    <alternativeName>
        <fullName evidence="1">Queuosine biosynthesis protein QueC</fullName>
    </alternativeName>
</protein>
<keyword id="KW-0067">ATP-binding</keyword>
<keyword id="KW-0436">Ligase</keyword>
<keyword id="KW-0479">Metal-binding</keyword>
<keyword id="KW-0547">Nucleotide-binding</keyword>
<keyword id="KW-0671">Queuosine biosynthesis</keyword>
<keyword id="KW-1185">Reference proteome</keyword>
<keyword id="KW-0862">Zinc</keyword>
<comment type="function">
    <text evidence="1">Catalyzes the ATP-dependent conversion of 7-carboxy-7-deazaguanine (CDG) to 7-cyano-7-deazaguanine (preQ(0)).</text>
</comment>
<comment type="catalytic activity">
    <reaction evidence="1">
        <text>7-carboxy-7-deazaguanine + NH4(+) + ATP = 7-cyano-7-deazaguanine + ADP + phosphate + H2O + H(+)</text>
        <dbReference type="Rhea" id="RHEA:27982"/>
        <dbReference type="ChEBI" id="CHEBI:15377"/>
        <dbReference type="ChEBI" id="CHEBI:15378"/>
        <dbReference type="ChEBI" id="CHEBI:28938"/>
        <dbReference type="ChEBI" id="CHEBI:30616"/>
        <dbReference type="ChEBI" id="CHEBI:43474"/>
        <dbReference type="ChEBI" id="CHEBI:45075"/>
        <dbReference type="ChEBI" id="CHEBI:61036"/>
        <dbReference type="ChEBI" id="CHEBI:456216"/>
        <dbReference type="EC" id="6.3.4.20"/>
    </reaction>
</comment>
<comment type="cofactor">
    <cofactor evidence="1">
        <name>Zn(2+)</name>
        <dbReference type="ChEBI" id="CHEBI:29105"/>
    </cofactor>
    <text evidence="1">Binds 1 zinc ion per subunit.</text>
</comment>
<comment type="pathway">
    <text evidence="1">Purine metabolism; 7-cyano-7-deazaguanine biosynthesis.</text>
</comment>
<comment type="similarity">
    <text evidence="1">Belongs to the QueC family.</text>
</comment>
<name>QUEC_CHLL3</name>
<sequence>MKAVLLLSGGMDSLVTTAIAHREGYELAAMHVNYGQRTWQKELQSFRSIADHYSITERLEVNADFLGRIGGSSLTDHSMPVAGADLRGSGIPTSYVPFRNACFLSMAVSWSEVIGAERLFIGAVEEDSSGYPDCRRVFYDAFNRVIELGTRPETGITILTPLIAMQKAQIVRNGMELGAPFEHSWSCYRSEGRACGVCDSCARRLRAFELQGIRDPIDYEVRPQYID</sequence>
<evidence type="ECO:0000255" key="1">
    <source>
        <dbReference type="HAMAP-Rule" id="MF_01633"/>
    </source>
</evidence>
<proteinExistence type="inferred from homology"/>
<reference key="1">
    <citation type="submission" date="2005-08" db="EMBL/GenBank/DDBJ databases">
        <title>Complete sequence of Pelodictyon luteolum DSM 273.</title>
        <authorList>
            <consortium name="US DOE Joint Genome Institute"/>
            <person name="Copeland A."/>
            <person name="Lucas S."/>
            <person name="Lapidus A."/>
            <person name="Barry K."/>
            <person name="Detter J.C."/>
            <person name="Glavina T."/>
            <person name="Hammon N."/>
            <person name="Israni S."/>
            <person name="Pitluck S."/>
            <person name="Bryant D."/>
            <person name="Schmutz J."/>
            <person name="Larimer F."/>
            <person name="Land M."/>
            <person name="Kyrpides N."/>
            <person name="Ivanova N."/>
            <person name="Richardson P."/>
        </authorList>
    </citation>
    <scope>NUCLEOTIDE SEQUENCE [LARGE SCALE GENOMIC DNA]</scope>
    <source>
        <strain>DSM 273 / BCRC 81028 / 2530</strain>
    </source>
</reference>
<accession>Q3B5F4</accession>